<feature type="chain" id="PRO_0000209857" description="Crustacean hyperglycemic hormone">
    <location>
        <begin position="1"/>
        <end position="73"/>
    </location>
</feature>
<feature type="modified residue" description="Valine amide" evidence="2">
    <location>
        <position position="73"/>
    </location>
</feature>
<feature type="disulfide bond" evidence="1">
    <location>
        <begin position="7"/>
        <end position="43"/>
    </location>
</feature>
<feature type="disulfide bond" evidence="1">
    <location>
        <begin position="23"/>
        <end position="39"/>
    </location>
</feature>
<feature type="disulfide bond" evidence="1">
    <location>
        <begin position="26"/>
        <end position="52"/>
    </location>
</feature>
<reference key="1">
    <citation type="journal article" date="1998" name="Biochem. Biophys. Res. Commun.">
        <title>Elucidation of the amino acid sequence of a crustacean hyperglycaemic hormone from the spiny lobster, Jasus lalandii.</title>
        <authorList>
            <person name="Marco H.G."/>
            <person name="Brandt W."/>
            <person name="Gade G."/>
        </authorList>
    </citation>
    <scope>PROTEIN SEQUENCE</scope>
    <scope>AMIDATION AT VAL-73</scope>
    <source>
        <tissue>Sinus gland</tissue>
    </source>
</reference>
<comment type="function">
    <text>Hormone found in the sinus gland of isopods and decapods which controls the blood sugar level. Has a secretagogue action over the amylase released from the midgut gland. May act as a stress hormone and may be involved in the control of molting and reproduction.</text>
</comment>
<comment type="subcellular location">
    <subcellularLocation>
        <location>Secreted</location>
    </subcellularLocation>
</comment>
<comment type="tissue specificity">
    <text>Produced by the medulla terminalis X-organ in the eyestalks and transported to the sinus gland where they are stored and released.</text>
</comment>
<comment type="similarity">
    <text evidence="3">Belongs to the arthropod CHH/MIH/GIH/VIH hormone family.</text>
</comment>
<keyword id="KW-0027">Amidation</keyword>
<keyword id="KW-0119">Carbohydrate metabolism</keyword>
<keyword id="KW-0903">Direct protein sequencing</keyword>
<keyword id="KW-1015">Disulfide bond</keyword>
<keyword id="KW-0313">Glucose metabolism</keyword>
<keyword id="KW-0372">Hormone</keyword>
<keyword id="KW-0527">Neuropeptide</keyword>
<keyword id="KW-0964">Secreted</keyword>
<protein>
    <recommendedName>
        <fullName>Crustacean hyperglycemic hormone</fullName>
        <shortName>CHH</shortName>
    </recommendedName>
    <alternativeName>
        <fullName>JAL-CHH-I</fullName>
    </alternativeName>
</protein>
<organism>
    <name type="scientific">Jasus lalandii</name>
    <name type="common">Cape rock lobster</name>
    <name type="synonym">Palinurus lalandii</name>
    <dbReference type="NCBI Taxonomy" id="99572"/>
    <lineage>
        <taxon>Eukaryota</taxon>
        <taxon>Metazoa</taxon>
        <taxon>Ecdysozoa</taxon>
        <taxon>Arthropoda</taxon>
        <taxon>Crustacea</taxon>
        <taxon>Multicrustacea</taxon>
        <taxon>Malacostraca</taxon>
        <taxon>Eumalacostraca</taxon>
        <taxon>Eucarida</taxon>
        <taxon>Decapoda</taxon>
        <taxon>Pleocyemata</taxon>
        <taxon>Achelata</taxon>
        <taxon>Palinuroidea</taxon>
        <taxon>Palinuridae</taxon>
        <taxon>Jasus</taxon>
    </lineage>
</organism>
<dbReference type="SMR" id="P56687"/>
<dbReference type="GO" id="GO:0005576">
    <property type="term" value="C:extracellular region"/>
    <property type="evidence" value="ECO:0007669"/>
    <property type="project" value="UniProtKB-SubCell"/>
</dbReference>
<dbReference type="GO" id="GO:0005184">
    <property type="term" value="F:neuropeptide hormone activity"/>
    <property type="evidence" value="ECO:0007669"/>
    <property type="project" value="InterPro"/>
</dbReference>
<dbReference type="GO" id="GO:0007623">
    <property type="term" value="P:circadian rhythm"/>
    <property type="evidence" value="ECO:0007669"/>
    <property type="project" value="TreeGrafter"/>
</dbReference>
<dbReference type="GO" id="GO:0006006">
    <property type="term" value="P:glucose metabolic process"/>
    <property type="evidence" value="ECO:0007669"/>
    <property type="project" value="UniProtKB-KW"/>
</dbReference>
<dbReference type="GO" id="GO:0007218">
    <property type="term" value="P:neuropeptide signaling pathway"/>
    <property type="evidence" value="ECO:0007669"/>
    <property type="project" value="UniProtKB-KW"/>
</dbReference>
<dbReference type="Gene3D" id="1.10.2010.10">
    <property type="entry name" value="Crustacean CHH/MIH/GIH neurohormone"/>
    <property type="match status" value="1"/>
</dbReference>
<dbReference type="InterPro" id="IPR018251">
    <property type="entry name" value="Crust_neurhormone_CS"/>
</dbReference>
<dbReference type="InterPro" id="IPR031098">
    <property type="entry name" value="Crust_neurohorm"/>
</dbReference>
<dbReference type="InterPro" id="IPR035957">
    <property type="entry name" value="Crust_neurohorm_sf"/>
</dbReference>
<dbReference type="InterPro" id="IPR001166">
    <property type="entry name" value="Hyperglycemic"/>
</dbReference>
<dbReference type="InterPro" id="IPR000346">
    <property type="entry name" value="Hyperglycemic1"/>
</dbReference>
<dbReference type="PANTHER" id="PTHR35981">
    <property type="entry name" value="ION TRANSPORT PEPTIDE, ISOFORM C"/>
    <property type="match status" value="1"/>
</dbReference>
<dbReference type="PANTHER" id="PTHR35981:SF2">
    <property type="entry name" value="ION TRANSPORT PEPTIDE, ISOFORM C"/>
    <property type="match status" value="1"/>
</dbReference>
<dbReference type="Pfam" id="PF01147">
    <property type="entry name" value="Crust_neurohorm"/>
    <property type="match status" value="1"/>
</dbReference>
<dbReference type="PRINTS" id="PR00548">
    <property type="entry name" value="HYPRGLYCEMC1"/>
</dbReference>
<dbReference type="PRINTS" id="PR00550">
    <property type="entry name" value="HYPRGLYCEMIC"/>
</dbReference>
<dbReference type="SUPFAM" id="SSF81778">
    <property type="entry name" value="Crustacean CHH/MIH/GIH neurohormone"/>
    <property type="match status" value="1"/>
</dbReference>
<dbReference type="PROSITE" id="PS01250">
    <property type="entry name" value="CHH_MIH_GIH"/>
    <property type="match status" value="1"/>
</dbReference>
<name>CHH_JASLA</name>
<accession>P56687</accession>
<proteinExistence type="evidence at protein level"/>
<sequence length="73" mass="8550">AVFDQSCKGVYDRSLFSKLDRVCDDCYNLYRKHYVATGCRRNCYGNLVFRQCLDDLMLVDVVDEYYVASVQMV</sequence>
<evidence type="ECO:0000250" key="1"/>
<evidence type="ECO:0000269" key="2">
    <source>
    </source>
</evidence>
<evidence type="ECO:0000305" key="3"/>